<evidence type="ECO:0000255" key="1">
    <source>
        <dbReference type="HAMAP-Rule" id="MF_00294"/>
    </source>
</evidence>
<evidence type="ECO:0000305" key="2"/>
<organism>
    <name type="scientific">Thermosynechococcus vestitus (strain NIES-2133 / IAM M-273 / BP-1)</name>
    <dbReference type="NCBI Taxonomy" id="197221"/>
    <lineage>
        <taxon>Bacteria</taxon>
        <taxon>Bacillati</taxon>
        <taxon>Cyanobacteriota</taxon>
        <taxon>Cyanophyceae</taxon>
        <taxon>Acaryochloridales</taxon>
        <taxon>Thermosynechococcaceae</taxon>
        <taxon>Thermosynechococcus</taxon>
    </lineage>
</organism>
<dbReference type="EMBL" id="BA000039">
    <property type="protein sequence ID" value="BAC09612.1"/>
    <property type="molecule type" value="Genomic_DNA"/>
</dbReference>
<dbReference type="RefSeq" id="NP_682850.1">
    <property type="nucleotide sequence ID" value="NC_004113.1"/>
</dbReference>
<dbReference type="RefSeq" id="WP_011057895.1">
    <property type="nucleotide sequence ID" value="NC_004113.1"/>
</dbReference>
<dbReference type="STRING" id="197221.gene:10748669"/>
<dbReference type="EnsemblBacteria" id="BAC09612">
    <property type="protein sequence ID" value="BAC09612"/>
    <property type="gene ID" value="BAC09612"/>
</dbReference>
<dbReference type="KEGG" id="tel:tsr2060"/>
<dbReference type="PATRIC" id="fig|197221.4.peg.2155"/>
<dbReference type="eggNOG" id="COG0267">
    <property type="taxonomic scope" value="Bacteria"/>
</dbReference>
<dbReference type="Proteomes" id="UP000000440">
    <property type="component" value="Chromosome"/>
</dbReference>
<dbReference type="GO" id="GO:0005737">
    <property type="term" value="C:cytoplasm"/>
    <property type="evidence" value="ECO:0007669"/>
    <property type="project" value="UniProtKB-ARBA"/>
</dbReference>
<dbReference type="GO" id="GO:1990904">
    <property type="term" value="C:ribonucleoprotein complex"/>
    <property type="evidence" value="ECO:0007669"/>
    <property type="project" value="UniProtKB-KW"/>
</dbReference>
<dbReference type="GO" id="GO:0005840">
    <property type="term" value="C:ribosome"/>
    <property type="evidence" value="ECO:0007669"/>
    <property type="project" value="UniProtKB-KW"/>
</dbReference>
<dbReference type="GO" id="GO:0003735">
    <property type="term" value="F:structural constituent of ribosome"/>
    <property type="evidence" value="ECO:0007669"/>
    <property type="project" value="InterPro"/>
</dbReference>
<dbReference type="GO" id="GO:0006412">
    <property type="term" value="P:translation"/>
    <property type="evidence" value="ECO:0007669"/>
    <property type="project" value="UniProtKB-UniRule"/>
</dbReference>
<dbReference type="Gene3D" id="2.20.28.120">
    <property type="entry name" value="Ribosomal protein L33"/>
    <property type="match status" value="1"/>
</dbReference>
<dbReference type="HAMAP" id="MF_00294">
    <property type="entry name" value="Ribosomal_bL33"/>
    <property type="match status" value="1"/>
</dbReference>
<dbReference type="InterPro" id="IPR001705">
    <property type="entry name" value="Ribosomal_bL33"/>
</dbReference>
<dbReference type="InterPro" id="IPR018264">
    <property type="entry name" value="Ribosomal_bL33_CS"/>
</dbReference>
<dbReference type="InterPro" id="IPR038584">
    <property type="entry name" value="Ribosomal_bL33_sf"/>
</dbReference>
<dbReference type="InterPro" id="IPR011332">
    <property type="entry name" value="Ribosomal_zn-bd"/>
</dbReference>
<dbReference type="NCBIfam" id="NF001764">
    <property type="entry name" value="PRK00504.1"/>
    <property type="match status" value="1"/>
</dbReference>
<dbReference type="NCBIfam" id="NF001860">
    <property type="entry name" value="PRK00595.1"/>
    <property type="match status" value="1"/>
</dbReference>
<dbReference type="NCBIfam" id="TIGR01023">
    <property type="entry name" value="rpmG_bact"/>
    <property type="match status" value="1"/>
</dbReference>
<dbReference type="PANTHER" id="PTHR43168">
    <property type="entry name" value="50S RIBOSOMAL PROTEIN L33, CHLOROPLASTIC"/>
    <property type="match status" value="1"/>
</dbReference>
<dbReference type="PANTHER" id="PTHR43168:SF2">
    <property type="entry name" value="LARGE RIBOSOMAL SUBUNIT PROTEIN BL33C"/>
    <property type="match status" value="1"/>
</dbReference>
<dbReference type="Pfam" id="PF00471">
    <property type="entry name" value="Ribosomal_L33"/>
    <property type="match status" value="1"/>
</dbReference>
<dbReference type="SUPFAM" id="SSF57829">
    <property type="entry name" value="Zn-binding ribosomal proteins"/>
    <property type="match status" value="1"/>
</dbReference>
<dbReference type="PROSITE" id="PS00582">
    <property type="entry name" value="RIBOSOMAL_L33"/>
    <property type="match status" value="1"/>
</dbReference>
<name>RL33_THEVB</name>
<proteinExistence type="inferred from homology"/>
<protein>
    <recommendedName>
        <fullName evidence="1">Large ribosomal subunit protein bL33</fullName>
    </recommendedName>
    <alternativeName>
        <fullName evidence="2">50S ribosomal protein L33</fullName>
    </alternativeName>
</protein>
<gene>
    <name evidence="1" type="primary">rpmG</name>
    <name evidence="1" type="synonym">rpl33</name>
    <name type="ordered locus">tsr2060</name>
</gene>
<keyword id="KW-1185">Reference proteome</keyword>
<keyword id="KW-0687">Ribonucleoprotein</keyword>
<keyword id="KW-0689">Ribosomal protein</keyword>
<sequence length="64" mass="7439">MAKAKGARIIITLECTECRTNPAQRSPGVSRYTTTKNRRTTTGRLELKKFCRYCNKHTIHREIK</sequence>
<comment type="similarity">
    <text evidence="1">Belongs to the bacterial ribosomal protein bL33 family.</text>
</comment>
<reference key="1">
    <citation type="journal article" date="2002" name="DNA Res.">
        <title>Complete genome structure of the thermophilic cyanobacterium Thermosynechococcus elongatus BP-1.</title>
        <authorList>
            <person name="Nakamura Y."/>
            <person name="Kaneko T."/>
            <person name="Sato S."/>
            <person name="Ikeuchi M."/>
            <person name="Katoh H."/>
            <person name="Sasamoto S."/>
            <person name="Watanabe A."/>
            <person name="Iriguchi M."/>
            <person name="Kawashima K."/>
            <person name="Kimura T."/>
            <person name="Kishida Y."/>
            <person name="Kiyokawa C."/>
            <person name="Kohara M."/>
            <person name="Matsumoto M."/>
            <person name="Matsuno A."/>
            <person name="Nakazaki N."/>
            <person name="Shimpo S."/>
            <person name="Sugimoto M."/>
            <person name="Takeuchi C."/>
            <person name="Yamada M."/>
            <person name="Tabata S."/>
        </authorList>
    </citation>
    <scope>NUCLEOTIDE SEQUENCE [LARGE SCALE GENOMIC DNA]</scope>
    <source>
        <strain>NIES-2133 / IAM M-273 / BP-1</strain>
    </source>
</reference>
<feature type="chain" id="PRO_0000170254" description="Large ribosomal subunit protein bL33">
    <location>
        <begin position="1"/>
        <end position="64"/>
    </location>
</feature>
<accession>Q8DH99</accession>